<reference key="1">
    <citation type="journal article" date="2002" name="Nature">
        <title>The genome sequence of Schizosaccharomyces pombe.</title>
        <authorList>
            <person name="Wood V."/>
            <person name="Gwilliam R."/>
            <person name="Rajandream M.A."/>
            <person name="Lyne M.H."/>
            <person name="Lyne R."/>
            <person name="Stewart A."/>
            <person name="Sgouros J.G."/>
            <person name="Peat N."/>
            <person name="Hayles J."/>
            <person name="Baker S.G."/>
            <person name="Basham D."/>
            <person name="Bowman S."/>
            <person name="Brooks K."/>
            <person name="Brown D."/>
            <person name="Brown S."/>
            <person name="Chillingworth T."/>
            <person name="Churcher C.M."/>
            <person name="Collins M."/>
            <person name="Connor R."/>
            <person name="Cronin A."/>
            <person name="Davis P."/>
            <person name="Feltwell T."/>
            <person name="Fraser A."/>
            <person name="Gentles S."/>
            <person name="Goble A."/>
            <person name="Hamlin N."/>
            <person name="Harris D.E."/>
            <person name="Hidalgo J."/>
            <person name="Hodgson G."/>
            <person name="Holroyd S."/>
            <person name="Hornsby T."/>
            <person name="Howarth S."/>
            <person name="Huckle E.J."/>
            <person name="Hunt S."/>
            <person name="Jagels K."/>
            <person name="James K.D."/>
            <person name="Jones L."/>
            <person name="Jones M."/>
            <person name="Leather S."/>
            <person name="McDonald S."/>
            <person name="McLean J."/>
            <person name="Mooney P."/>
            <person name="Moule S."/>
            <person name="Mungall K.L."/>
            <person name="Murphy L.D."/>
            <person name="Niblett D."/>
            <person name="Odell C."/>
            <person name="Oliver K."/>
            <person name="O'Neil S."/>
            <person name="Pearson D."/>
            <person name="Quail M.A."/>
            <person name="Rabbinowitsch E."/>
            <person name="Rutherford K.M."/>
            <person name="Rutter S."/>
            <person name="Saunders D."/>
            <person name="Seeger K."/>
            <person name="Sharp S."/>
            <person name="Skelton J."/>
            <person name="Simmonds M.N."/>
            <person name="Squares R."/>
            <person name="Squares S."/>
            <person name="Stevens K."/>
            <person name="Taylor K."/>
            <person name="Taylor R.G."/>
            <person name="Tivey A."/>
            <person name="Walsh S.V."/>
            <person name="Warren T."/>
            <person name="Whitehead S."/>
            <person name="Woodward J.R."/>
            <person name="Volckaert G."/>
            <person name="Aert R."/>
            <person name="Robben J."/>
            <person name="Grymonprez B."/>
            <person name="Weltjens I."/>
            <person name="Vanstreels E."/>
            <person name="Rieger M."/>
            <person name="Schaefer M."/>
            <person name="Mueller-Auer S."/>
            <person name="Gabel C."/>
            <person name="Fuchs M."/>
            <person name="Duesterhoeft A."/>
            <person name="Fritzc C."/>
            <person name="Holzer E."/>
            <person name="Moestl D."/>
            <person name="Hilbert H."/>
            <person name="Borzym K."/>
            <person name="Langer I."/>
            <person name="Beck A."/>
            <person name="Lehrach H."/>
            <person name="Reinhardt R."/>
            <person name="Pohl T.M."/>
            <person name="Eger P."/>
            <person name="Zimmermann W."/>
            <person name="Wedler H."/>
            <person name="Wambutt R."/>
            <person name="Purnelle B."/>
            <person name="Goffeau A."/>
            <person name="Cadieu E."/>
            <person name="Dreano S."/>
            <person name="Gloux S."/>
            <person name="Lelaure V."/>
            <person name="Mottier S."/>
            <person name="Galibert F."/>
            <person name="Aves S.J."/>
            <person name="Xiang Z."/>
            <person name="Hunt C."/>
            <person name="Moore K."/>
            <person name="Hurst S.M."/>
            <person name="Lucas M."/>
            <person name="Rochet M."/>
            <person name="Gaillardin C."/>
            <person name="Tallada V.A."/>
            <person name="Garzon A."/>
            <person name="Thode G."/>
            <person name="Daga R.R."/>
            <person name="Cruzado L."/>
            <person name="Jimenez J."/>
            <person name="Sanchez M."/>
            <person name="del Rey F."/>
            <person name="Benito J."/>
            <person name="Dominguez A."/>
            <person name="Revuelta J.L."/>
            <person name="Moreno S."/>
            <person name="Armstrong J."/>
            <person name="Forsburg S.L."/>
            <person name="Cerutti L."/>
            <person name="Lowe T."/>
            <person name="McCombie W.R."/>
            <person name="Paulsen I."/>
            <person name="Potashkin J."/>
            <person name="Shpakovski G.V."/>
            <person name="Ussery D."/>
            <person name="Barrell B.G."/>
            <person name="Nurse P."/>
        </authorList>
    </citation>
    <scope>NUCLEOTIDE SEQUENCE [LARGE SCALE GENOMIC DNA]</scope>
    <source>
        <strain>972 / ATCC 24843</strain>
    </source>
</reference>
<proteinExistence type="predicted"/>
<organism>
    <name type="scientific">Schizosaccharomyces pombe (strain 972 / ATCC 24843)</name>
    <name type="common">Fission yeast</name>
    <dbReference type="NCBI Taxonomy" id="284812"/>
    <lineage>
        <taxon>Eukaryota</taxon>
        <taxon>Fungi</taxon>
        <taxon>Dikarya</taxon>
        <taxon>Ascomycota</taxon>
        <taxon>Taphrinomycotina</taxon>
        <taxon>Schizosaccharomycetes</taxon>
        <taxon>Schizosaccharomycetales</taxon>
        <taxon>Schizosaccharomycetaceae</taxon>
        <taxon>Schizosaccharomyces</taxon>
    </lineage>
</organism>
<sequence>MSQDSESFIRQLFKAFTDFSTDVESLRGFLTPDYRQLVDGRELTLDDFISHAKALRTHLHRLDINVQQIVCQGNKAATVHIAHAIRSSGESSRIKVIAFYSFKDGRISLIDELTYVLEGGNADRELGSVQ</sequence>
<name>YAO4_SCHPO</name>
<accession>Q10083</accession>
<protein>
    <recommendedName>
        <fullName>Uncharacterized protein C11D3.04c</fullName>
    </recommendedName>
</protein>
<keyword id="KW-1185">Reference proteome</keyword>
<dbReference type="EMBL" id="CU329670">
    <property type="protein sequence ID" value="CAA92305.1"/>
    <property type="molecule type" value="Genomic_DNA"/>
</dbReference>
<dbReference type="PIR" id="T37515">
    <property type="entry name" value="T37515"/>
</dbReference>
<dbReference type="RefSeq" id="NP_592801.1">
    <property type="nucleotide sequence ID" value="NM_001018201.2"/>
</dbReference>
<dbReference type="SMR" id="Q10083"/>
<dbReference type="BioGRID" id="279445">
    <property type="interactions" value="4"/>
</dbReference>
<dbReference type="FunCoup" id="Q10083">
    <property type="interactions" value="1"/>
</dbReference>
<dbReference type="STRING" id="284812.Q10083"/>
<dbReference type="PaxDb" id="4896-SPAC11D3.04c.1"/>
<dbReference type="EnsemblFungi" id="SPAC11D3.04c.1">
    <property type="protein sequence ID" value="SPAC11D3.04c.1:pep"/>
    <property type="gene ID" value="SPAC11D3.04c"/>
</dbReference>
<dbReference type="PomBase" id="SPAC11D3.04c"/>
<dbReference type="VEuPathDB" id="FungiDB:SPAC11D3.04c"/>
<dbReference type="HOGENOM" id="CLU_124041_2_0_1"/>
<dbReference type="InParanoid" id="Q10083"/>
<dbReference type="OMA" id="KYEVFLF"/>
<dbReference type="PRO" id="PR:Q10083"/>
<dbReference type="Proteomes" id="UP000002485">
    <property type="component" value="Chromosome I"/>
</dbReference>
<dbReference type="GO" id="GO:0005829">
    <property type="term" value="C:cytosol"/>
    <property type="evidence" value="ECO:0007005"/>
    <property type="project" value="PomBase"/>
</dbReference>
<dbReference type="GO" id="GO:0005634">
    <property type="term" value="C:nucleus"/>
    <property type="evidence" value="ECO:0007005"/>
    <property type="project" value="PomBase"/>
</dbReference>
<dbReference type="GO" id="GO:0009975">
    <property type="term" value="F:cyclase activity"/>
    <property type="evidence" value="ECO:0000255"/>
    <property type="project" value="PomBase"/>
</dbReference>
<dbReference type="Gene3D" id="3.10.450.50">
    <property type="match status" value="1"/>
</dbReference>
<dbReference type="InterPro" id="IPR032710">
    <property type="entry name" value="NTF2-like_dom_sf"/>
</dbReference>
<dbReference type="InterPro" id="IPR037401">
    <property type="entry name" value="SnoaL-like"/>
</dbReference>
<dbReference type="Pfam" id="PF12680">
    <property type="entry name" value="SnoaL_2"/>
    <property type="match status" value="1"/>
</dbReference>
<dbReference type="SUPFAM" id="SSF54427">
    <property type="entry name" value="NTF2-like"/>
    <property type="match status" value="1"/>
</dbReference>
<feature type="chain" id="PRO_0000116453" description="Uncharacterized protein C11D3.04c">
    <location>
        <begin position="1"/>
        <end position="130"/>
    </location>
</feature>
<gene>
    <name type="ORF">SPAC11D3.04c</name>
</gene>